<organism>
    <name type="scientific">Rhodopseudomonas palustris (strain BisA53)</name>
    <dbReference type="NCBI Taxonomy" id="316055"/>
    <lineage>
        <taxon>Bacteria</taxon>
        <taxon>Pseudomonadati</taxon>
        <taxon>Pseudomonadota</taxon>
        <taxon>Alphaproteobacteria</taxon>
        <taxon>Hyphomicrobiales</taxon>
        <taxon>Nitrobacteraceae</taxon>
        <taxon>Rhodopseudomonas</taxon>
    </lineage>
</organism>
<evidence type="ECO:0000255" key="1">
    <source>
        <dbReference type="HAMAP-Rule" id="MF_01356"/>
    </source>
</evidence>
<evidence type="ECO:0000256" key="2">
    <source>
        <dbReference type="SAM" id="MobiDB-lite"/>
    </source>
</evidence>
<accession>Q07QX4</accession>
<name>NUOB1_RHOP5</name>
<keyword id="KW-0004">4Fe-4S</keyword>
<keyword id="KW-0997">Cell inner membrane</keyword>
<keyword id="KW-1003">Cell membrane</keyword>
<keyword id="KW-0408">Iron</keyword>
<keyword id="KW-0411">Iron-sulfur</keyword>
<keyword id="KW-0472">Membrane</keyword>
<keyword id="KW-0479">Metal-binding</keyword>
<keyword id="KW-0520">NAD</keyword>
<keyword id="KW-0874">Quinone</keyword>
<keyword id="KW-1278">Translocase</keyword>
<keyword id="KW-0813">Transport</keyword>
<keyword id="KW-0830">Ubiquinone</keyword>
<gene>
    <name evidence="1" type="primary">nuoB1</name>
    <name type="ordered locus">RPE_1711</name>
</gene>
<dbReference type="EC" id="7.1.1.-" evidence="1"/>
<dbReference type="EMBL" id="CP000463">
    <property type="protein sequence ID" value="ABJ05660.1"/>
    <property type="molecule type" value="Genomic_DNA"/>
</dbReference>
<dbReference type="SMR" id="Q07QX4"/>
<dbReference type="STRING" id="316055.RPE_1711"/>
<dbReference type="KEGG" id="rpe:RPE_1711"/>
<dbReference type="eggNOG" id="COG0377">
    <property type="taxonomic scope" value="Bacteria"/>
</dbReference>
<dbReference type="HOGENOM" id="CLU_055737_7_3_5"/>
<dbReference type="OrthoDB" id="9786737at2"/>
<dbReference type="GO" id="GO:0005886">
    <property type="term" value="C:plasma membrane"/>
    <property type="evidence" value="ECO:0007669"/>
    <property type="project" value="UniProtKB-SubCell"/>
</dbReference>
<dbReference type="GO" id="GO:0045271">
    <property type="term" value="C:respiratory chain complex I"/>
    <property type="evidence" value="ECO:0007669"/>
    <property type="project" value="TreeGrafter"/>
</dbReference>
<dbReference type="GO" id="GO:0051539">
    <property type="term" value="F:4 iron, 4 sulfur cluster binding"/>
    <property type="evidence" value="ECO:0007669"/>
    <property type="project" value="UniProtKB-KW"/>
</dbReference>
<dbReference type="GO" id="GO:0005506">
    <property type="term" value="F:iron ion binding"/>
    <property type="evidence" value="ECO:0007669"/>
    <property type="project" value="UniProtKB-UniRule"/>
</dbReference>
<dbReference type="GO" id="GO:0008137">
    <property type="term" value="F:NADH dehydrogenase (ubiquinone) activity"/>
    <property type="evidence" value="ECO:0007669"/>
    <property type="project" value="InterPro"/>
</dbReference>
<dbReference type="GO" id="GO:0050136">
    <property type="term" value="F:NADH:ubiquinone reductase (non-electrogenic) activity"/>
    <property type="evidence" value="ECO:0007669"/>
    <property type="project" value="UniProtKB-UniRule"/>
</dbReference>
<dbReference type="GO" id="GO:0048038">
    <property type="term" value="F:quinone binding"/>
    <property type="evidence" value="ECO:0007669"/>
    <property type="project" value="UniProtKB-KW"/>
</dbReference>
<dbReference type="GO" id="GO:0009060">
    <property type="term" value="P:aerobic respiration"/>
    <property type="evidence" value="ECO:0007669"/>
    <property type="project" value="TreeGrafter"/>
</dbReference>
<dbReference type="GO" id="GO:0015990">
    <property type="term" value="P:electron transport coupled proton transport"/>
    <property type="evidence" value="ECO:0007669"/>
    <property type="project" value="TreeGrafter"/>
</dbReference>
<dbReference type="FunFam" id="3.40.50.12280:FF:000002">
    <property type="entry name" value="NADH-quinone oxidoreductase subunit B"/>
    <property type="match status" value="1"/>
</dbReference>
<dbReference type="Gene3D" id="3.40.50.12280">
    <property type="match status" value="1"/>
</dbReference>
<dbReference type="HAMAP" id="MF_01356">
    <property type="entry name" value="NDH1_NuoB"/>
    <property type="match status" value="1"/>
</dbReference>
<dbReference type="InterPro" id="IPR006137">
    <property type="entry name" value="NADH_UbQ_OxRdtase-like_20kDa"/>
</dbReference>
<dbReference type="InterPro" id="IPR006138">
    <property type="entry name" value="NADH_UQ_OxRdtase_20Kd_su"/>
</dbReference>
<dbReference type="NCBIfam" id="TIGR01957">
    <property type="entry name" value="nuoB_fam"/>
    <property type="match status" value="1"/>
</dbReference>
<dbReference type="NCBIfam" id="NF005012">
    <property type="entry name" value="PRK06411.1"/>
    <property type="match status" value="1"/>
</dbReference>
<dbReference type="PANTHER" id="PTHR11995">
    <property type="entry name" value="NADH DEHYDROGENASE"/>
    <property type="match status" value="1"/>
</dbReference>
<dbReference type="PANTHER" id="PTHR11995:SF14">
    <property type="entry name" value="NADH DEHYDROGENASE [UBIQUINONE] IRON-SULFUR PROTEIN 7, MITOCHONDRIAL"/>
    <property type="match status" value="1"/>
</dbReference>
<dbReference type="Pfam" id="PF01058">
    <property type="entry name" value="Oxidored_q6"/>
    <property type="match status" value="1"/>
</dbReference>
<dbReference type="SUPFAM" id="SSF56770">
    <property type="entry name" value="HydA/Nqo6-like"/>
    <property type="match status" value="1"/>
</dbReference>
<dbReference type="PROSITE" id="PS01150">
    <property type="entry name" value="COMPLEX1_20K"/>
    <property type="match status" value="1"/>
</dbReference>
<proteinExistence type="inferred from homology"/>
<reference key="1">
    <citation type="submission" date="2006-09" db="EMBL/GenBank/DDBJ databases">
        <title>Complete sequence of Rhodopseudomonas palustris BisA53.</title>
        <authorList>
            <consortium name="US DOE Joint Genome Institute"/>
            <person name="Copeland A."/>
            <person name="Lucas S."/>
            <person name="Lapidus A."/>
            <person name="Barry K."/>
            <person name="Detter J.C."/>
            <person name="Glavina del Rio T."/>
            <person name="Hammon N."/>
            <person name="Israni S."/>
            <person name="Dalin E."/>
            <person name="Tice H."/>
            <person name="Pitluck S."/>
            <person name="Chain P."/>
            <person name="Malfatti S."/>
            <person name="Shin M."/>
            <person name="Vergez L."/>
            <person name="Schmutz J."/>
            <person name="Larimer F."/>
            <person name="Land M."/>
            <person name="Hauser L."/>
            <person name="Pelletier D.A."/>
            <person name="Kyrpides N."/>
            <person name="Kim E."/>
            <person name="Harwood C.S."/>
            <person name="Oda Y."/>
            <person name="Richardson P."/>
        </authorList>
    </citation>
    <scope>NUCLEOTIDE SEQUENCE [LARGE SCALE GENOMIC DNA]</scope>
    <source>
        <strain>BisA53</strain>
    </source>
</reference>
<sequence length="205" mass="22943">MSYELQRPGEEMPIEEQMARTSLFTRLEDLVAWSRKNSLWPFNFGLSCCYVEQVTALTPVFDQARFGAEVIRASPRQADLLVVSGTVFHKMAAPLLRLYEQMRAPRWVISMGACANSGGMYDVYSVVQGVDSFLPVDVYIPGCPPRPEAVLDALILLQQQVGAQRRPLGVTVGNAAGLGFEAPRRRDQRRDERMAQTLLDPPEKL</sequence>
<comment type="function">
    <text evidence="1">NDH-1 shuttles electrons from NADH, via FMN and iron-sulfur (Fe-S) centers, to quinones in the respiratory chain. The immediate electron acceptor for the enzyme in this species is believed to be ubiquinone. Couples the redox reaction to proton translocation (for every two electrons transferred, four hydrogen ions are translocated across the cytoplasmic membrane), and thus conserves the redox energy in a proton gradient.</text>
</comment>
<comment type="catalytic activity">
    <reaction evidence="1">
        <text>a quinone + NADH + 5 H(+)(in) = a quinol + NAD(+) + 4 H(+)(out)</text>
        <dbReference type="Rhea" id="RHEA:57888"/>
        <dbReference type="ChEBI" id="CHEBI:15378"/>
        <dbReference type="ChEBI" id="CHEBI:24646"/>
        <dbReference type="ChEBI" id="CHEBI:57540"/>
        <dbReference type="ChEBI" id="CHEBI:57945"/>
        <dbReference type="ChEBI" id="CHEBI:132124"/>
    </reaction>
</comment>
<comment type="cofactor">
    <cofactor evidence="1">
        <name>[4Fe-4S] cluster</name>
        <dbReference type="ChEBI" id="CHEBI:49883"/>
    </cofactor>
    <text evidence="1">Binds 1 [4Fe-4S] cluster.</text>
</comment>
<comment type="subunit">
    <text evidence="1">NDH-1 is composed of 14 different subunits. Subunits NuoB, C, D, E, F, and G constitute the peripheral sector of the complex.</text>
</comment>
<comment type="subcellular location">
    <subcellularLocation>
        <location evidence="1">Cell inner membrane</location>
        <topology evidence="1">Peripheral membrane protein</topology>
        <orientation evidence="1">Cytoplasmic side</orientation>
    </subcellularLocation>
</comment>
<comment type="similarity">
    <text evidence="1">Belongs to the complex I 20 kDa subunit family.</text>
</comment>
<feature type="chain" id="PRO_0000376338" description="NADH-quinone oxidoreductase subunit B 1">
    <location>
        <begin position="1"/>
        <end position="205"/>
    </location>
</feature>
<feature type="region of interest" description="Disordered" evidence="2">
    <location>
        <begin position="184"/>
        <end position="205"/>
    </location>
</feature>
<feature type="compositionally biased region" description="Basic and acidic residues" evidence="2">
    <location>
        <begin position="184"/>
        <end position="194"/>
    </location>
</feature>
<feature type="binding site" evidence="1">
    <location>
        <position position="48"/>
    </location>
    <ligand>
        <name>[4Fe-4S] cluster</name>
        <dbReference type="ChEBI" id="CHEBI:49883"/>
    </ligand>
</feature>
<feature type="binding site" evidence="1">
    <location>
        <position position="49"/>
    </location>
    <ligand>
        <name>[4Fe-4S] cluster</name>
        <dbReference type="ChEBI" id="CHEBI:49883"/>
    </ligand>
</feature>
<feature type="binding site" evidence="1">
    <location>
        <position position="114"/>
    </location>
    <ligand>
        <name>[4Fe-4S] cluster</name>
        <dbReference type="ChEBI" id="CHEBI:49883"/>
    </ligand>
</feature>
<feature type="binding site" evidence="1">
    <location>
        <position position="143"/>
    </location>
    <ligand>
        <name>[4Fe-4S] cluster</name>
        <dbReference type="ChEBI" id="CHEBI:49883"/>
    </ligand>
</feature>
<protein>
    <recommendedName>
        <fullName evidence="1">NADH-quinone oxidoreductase subunit B 1</fullName>
        <ecNumber evidence="1">7.1.1.-</ecNumber>
    </recommendedName>
    <alternativeName>
        <fullName evidence="1">NADH dehydrogenase I subunit B 1</fullName>
    </alternativeName>
    <alternativeName>
        <fullName evidence="1">NDH-1 subunit B 1</fullName>
    </alternativeName>
</protein>